<reference key="1">
    <citation type="journal article" date="1995" name="Science">
        <title>Whole-genome random sequencing and assembly of Haemophilus influenzae Rd.</title>
        <authorList>
            <person name="Fleischmann R.D."/>
            <person name="Adams M.D."/>
            <person name="White O."/>
            <person name="Clayton R.A."/>
            <person name="Kirkness E.F."/>
            <person name="Kerlavage A.R."/>
            <person name="Bult C.J."/>
            <person name="Tomb J.-F."/>
            <person name="Dougherty B.A."/>
            <person name="Merrick J.M."/>
            <person name="McKenney K."/>
            <person name="Sutton G.G."/>
            <person name="FitzHugh W."/>
            <person name="Fields C.A."/>
            <person name="Gocayne J.D."/>
            <person name="Scott J.D."/>
            <person name="Shirley R."/>
            <person name="Liu L.-I."/>
            <person name="Glodek A."/>
            <person name="Kelley J.M."/>
            <person name="Weidman J.F."/>
            <person name="Phillips C.A."/>
            <person name="Spriggs T."/>
            <person name="Hedblom E."/>
            <person name="Cotton M.D."/>
            <person name="Utterback T.R."/>
            <person name="Hanna M.C."/>
            <person name="Nguyen D.T."/>
            <person name="Saudek D.M."/>
            <person name="Brandon R.C."/>
            <person name="Fine L.D."/>
            <person name="Fritchman J.L."/>
            <person name="Fuhrmann J.L."/>
            <person name="Geoghagen N.S.M."/>
            <person name="Gnehm C.L."/>
            <person name="McDonald L.A."/>
            <person name="Small K.V."/>
            <person name="Fraser C.M."/>
            <person name="Smith H.O."/>
            <person name="Venter J.C."/>
        </authorList>
    </citation>
    <scope>NUCLEOTIDE SEQUENCE [LARGE SCALE GENOMIC DNA]</scope>
    <source>
        <strain>ATCC 51907 / DSM 11121 / KW20 / Rd</strain>
    </source>
</reference>
<evidence type="ECO:0000255" key="1">
    <source>
        <dbReference type="PROSITE-ProRule" id="PRU00319"/>
    </source>
</evidence>
<organism>
    <name type="scientific">Haemophilus influenzae (strain ATCC 51907 / DSM 11121 / KW20 / Rd)</name>
    <dbReference type="NCBI Taxonomy" id="71421"/>
    <lineage>
        <taxon>Bacteria</taxon>
        <taxon>Pseudomonadati</taxon>
        <taxon>Pseudomonadota</taxon>
        <taxon>Gammaproteobacteria</taxon>
        <taxon>Pasteurellales</taxon>
        <taxon>Pasteurellaceae</taxon>
        <taxon>Haemophilus</taxon>
    </lineage>
</organism>
<accession>P44580</accession>
<keyword id="KW-0238">DNA-binding</keyword>
<keyword id="KW-1185">Reference proteome</keyword>
<keyword id="KW-0804">Transcription</keyword>
<keyword id="KW-0805">Transcription regulation</keyword>
<gene>
    <name type="ordered locus">HI_0224</name>
</gene>
<feature type="chain" id="PRO_0000111750" description="Uncharacterized HTH-type transcriptional regulator HI_0224">
    <location>
        <begin position="1"/>
        <end position="168"/>
    </location>
</feature>
<feature type="domain" description="HTH asnC-type" evidence="1">
    <location>
        <begin position="19"/>
        <end position="80"/>
    </location>
</feature>
<feature type="DNA-binding region" description="H-T-H motif" evidence="1">
    <location>
        <begin position="38"/>
        <end position="57"/>
    </location>
</feature>
<sequence>MIIFFSIVTFLRNYLMQTLDKLDRHILNVLQQDAMIPLKELSEKVNSSVATCQRRVQSLTDSGIITKRVAVVSPKAVGRTISVFVMVEMDNQHSYYQEQFERKMRQEDEVVSCYEISGDYDFMLLLHAKDMESYHAFTRRVLTGEFHVRTYKSLFVMNFTKADSGIIL</sequence>
<protein>
    <recommendedName>
        <fullName>Uncharacterized HTH-type transcriptional regulator HI_0224</fullName>
    </recommendedName>
</protein>
<name>Y224_HAEIN</name>
<proteinExistence type="predicted"/>
<dbReference type="EMBL" id="L42023">
    <property type="protein sequence ID" value="AAC21893.1"/>
    <property type="molecule type" value="Genomic_DNA"/>
</dbReference>
<dbReference type="PIR" id="B64056">
    <property type="entry name" value="B64056"/>
</dbReference>
<dbReference type="RefSeq" id="NP_438396.2">
    <property type="nucleotide sequence ID" value="NC_000907.1"/>
</dbReference>
<dbReference type="SMR" id="P44580"/>
<dbReference type="STRING" id="71421.HI_0224"/>
<dbReference type="EnsemblBacteria" id="AAC21893">
    <property type="protein sequence ID" value="AAC21893"/>
    <property type="gene ID" value="HI_0224"/>
</dbReference>
<dbReference type="KEGG" id="hin:HI_0224"/>
<dbReference type="PATRIC" id="fig|71421.8.peg.237"/>
<dbReference type="eggNOG" id="COG1522">
    <property type="taxonomic scope" value="Bacteria"/>
</dbReference>
<dbReference type="HOGENOM" id="CLU_091233_0_1_6"/>
<dbReference type="OrthoDB" id="8590699at2"/>
<dbReference type="PhylomeDB" id="P44580"/>
<dbReference type="Proteomes" id="UP000000579">
    <property type="component" value="Chromosome"/>
</dbReference>
<dbReference type="GO" id="GO:0005829">
    <property type="term" value="C:cytosol"/>
    <property type="evidence" value="ECO:0000318"/>
    <property type="project" value="GO_Central"/>
</dbReference>
<dbReference type="GO" id="GO:0043565">
    <property type="term" value="F:sequence-specific DNA binding"/>
    <property type="evidence" value="ECO:0000318"/>
    <property type="project" value="GO_Central"/>
</dbReference>
<dbReference type="GO" id="GO:0043200">
    <property type="term" value="P:response to amino acid"/>
    <property type="evidence" value="ECO:0000318"/>
    <property type="project" value="GO_Central"/>
</dbReference>
<dbReference type="Gene3D" id="3.30.70.920">
    <property type="match status" value="1"/>
</dbReference>
<dbReference type="Gene3D" id="1.10.10.10">
    <property type="entry name" value="Winged helix-like DNA-binding domain superfamily/Winged helix DNA-binding domain"/>
    <property type="match status" value="1"/>
</dbReference>
<dbReference type="InterPro" id="IPR000485">
    <property type="entry name" value="AsnC-type_HTH_dom"/>
</dbReference>
<dbReference type="InterPro" id="IPR011008">
    <property type="entry name" value="Dimeric_a/b-barrel"/>
</dbReference>
<dbReference type="InterPro" id="IPR019888">
    <property type="entry name" value="Tscrpt_reg_AsnC-like"/>
</dbReference>
<dbReference type="InterPro" id="IPR019887">
    <property type="entry name" value="Tscrpt_reg_AsnC/Lrp_C"/>
</dbReference>
<dbReference type="InterPro" id="IPR019885">
    <property type="entry name" value="Tscrpt_reg_HTH_AsnC-type_CS"/>
</dbReference>
<dbReference type="InterPro" id="IPR036388">
    <property type="entry name" value="WH-like_DNA-bd_sf"/>
</dbReference>
<dbReference type="InterPro" id="IPR036390">
    <property type="entry name" value="WH_DNA-bd_sf"/>
</dbReference>
<dbReference type="PANTHER" id="PTHR30154">
    <property type="entry name" value="LEUCINE-RESPONSIVE REGULATORY PROTEIN"/>
    <property type="match status" value="1"/>
</dbReference>
<dbReference type="PANTHER" id="PTHR30154:SF34">
    <property type="entry name" value="TRANSCRIPTIONAL REGULATOR AZLB"/>
    <property type="match status" value="1"/>
</dbReference>
<dbReference type="Pfam" id="PF01037">
    <property type="entry name" value="AsnC_trans_reg"/>
    <property type="match status" value="1"/>
</dbReference>
<dbReference type="Pfam" id="PF13412">
    <property type="entry name" value="HTH_24"/>
    <property type="match status" value="1"/>
</dbReference>
<dbReference type="PRINTS" id="PR00033">
    <property type="entry name" value="HTHASNC"/>
</dbReference>
<dbReference type="SMART" id="SM00344">
    <property type="entry name" value="HTH_ASNC"/>
    <property type="match status" value="1"/>
</dbReference>
<dbReference type="SUPFAM" id="SSF54909">
    <property type="entry name" value="Dimeric alpha+beta barrel"/>
    <property type="match status" value="1"/>
</dbReference>
<dbReference type="SUPFAM" id="SSF46785">
    <property type="entry name" value="Winged helix' DNA-binding domain"/>
    <property type="match status" value="1"/>
</dbReference>
<dbReference type="PROSITE" id="PS00519">
    <property type="entry name" value="HTH_ASNC_1"/>
    <property type="match status" value="1"/>
</dbReference>
<dbReference type="PROSITE" id="PS50956">
    <property type="entry name" value="HTH_ASNC_2"/>
    <property type="match status" value="1"/>
</dbReference>